<protein>
    <recommendedName>
        <fullName evidence="1">HTH-type transcriptional repressor PurR</fullName>
    </recommendedName>
    <alternativeName>
        <fullName evidence="1">Pur regulon repressor</fullName>
    </alternativeName>
    <alternativeName>
        <fullName evidence="1">Purine nucleotide synthesis repressor</fullName>
    </alternativeName>
</protein>
<evidence type="ECO:0000255" key="1">
    <source>
        <dbReference type="HAMAP-Rule" id="MF_01277"/>
    </source>
</evidence>
<comment type="function">
    <text evidence="1">Is the main repressor of the genes involved in the de novo synthesis of purine nucleotides, regulating purB, purC, purEK, purF, purHD, purL, purMN and guaBA expression. PurR is allosterically activated to bind its cognate DNA by binding the purine corepressors, hypoxanthine or guanine, thereby effecting transcription repression.</text>
</comment>
<comment type="pathway">
    <text>Purine metabolism; purine nucleotide biosynthesis [regulation].</text>
</comment>
<comment type="subunit">
    <text evidence="1">Homodimer.</text>
</comment>
<comment type="domain">
    <text evidence="1">Consists of two structural and functional domains: an N-terminal DNA-binding domain, approximately the first 60 residues, and a larger C-terminal domain, approximately 280 residues, which imparts the function of corepressor binding and oligomerization.</text>
</comment>
<sequence length="341" mass="38048">MATIKDVAKRANVSTTTVSHVINKTRFVAEETRNAVWAAIKELHYSPSAVARSLKVNHTKSIGLLATSSEAAYFAEIIEAVEKNCFQKGYTLILGNAWNNLEKQRAYLSMMAQKRVDGLLVMCSEYPEPLLSMLEEYRHIPMVVMDWGEAKADFTDTVIDNAFAGGYMAGRYLVERGHRDIGVIPGPLERNTGAGRLAGFMKAMEEALINVPDNWIVQGDFEPESGYHAMQQILSQSHRPTAVFCGGDIMAMGALCAADEMGLRVPQDVSVIGYDNVRNARYFTPALTTIHQPKDSLGETAFNMLLDRIVNKREESQSIEVHPRLVERRSVADGPFRDYRR</sequence>
<gene>
    <name evidence="1" type="primary">purR</name>
    <name type="ordered locus">SPC_2301</name>
</gene>
<accession>C0Q5V2</accession>
<organism>
    <name type="scientific">Salmonella paratyphi C (strain RKS4594)</name>
    <dbReference type="NCBI Taxonomy" id="476213"/>
    <lineage>
        <taxon>Bacteria</taxon>
        <taxon>Pseudomonadati</taxon>
        <taxon>Pseudomonadota</taxon>
        <taxon>Gammaproteobacteria</taxon>
        <taxon>Enterobacterales</taxon>
        <taxon>Enterobacteriaceae</taxon>
        <taxon>Salmonella</taxon>
    </lineage>
</organism>
<name>PURR_SALPC</name>
<keyword id="KW-0238">DNA-binding</keyword>
<keyword id="KW-0658">Purine biosynthesis</keyword>
<keyword id="KW-0678">Repressor</keyword>
<keyword id="KW-0804">Transcription</keyword>
<keyword id="KW-0805">Transcription regulation</keyword>
<proteinExistence type="inferred from homology"/>
<dbReference type="EMBL" id="CP000857">
    <property type="protein sequence ID" value="ACN46418.1"/>
    <property type="molecule type" value="Genomic_DNA"/>
</dbReference>
<dbReference type="RefSeq" id="WP_000190993.1">
    <property type="nucleotide sequence ID" value="NC_012125.1"/>
</dbReference>
<dbReference type="SMR" id="C0Q5V2"/>
<dbReference type="KEGG" id="sei:SPC_2301"/>
<dbReference type="HOGENOM" id="CLU_037628_6_2_6"/>
<dbReference type="UniPathway" id="UPA00488"/>
<dbReference type="Proteomes" id="UP000001599">
    <property type="component" value="Chromosome"/>
</dbReference>
<dbReference type="GO" id="GO:0003700">
    <property type="term" value="F:DNA-binding transcription factor activity"/>
    <property type="evidence" value="ECO:0007669"/>
    <property type="project" value="TreeGrafter"/>
</dbReference>
<dbReference type="GO" id="GO:0000976">
    <property type="term" value="F:transcription cis-regulatory region binding"/>
    <property type="evidence" value="ECO:0007669"/>
    <property type="project" value="TreeGrafter"/>
</dbReference>
<dbReference type="GO" id="GO:0045892">
    <property type="term" value="P:negative regulation of DNA-templated transcription"/>
    <property type="evidence" value="ECO:0007669"/>
    <property type="project" value="UniProtKB-UniRule"/>
</dbReference>
<dbReference type="GO" id="GO:0006164">
    <property type="term" value="P:purine nucleotide biosynthetic process"/>
    <property type="evidence" value="ECO:0007669"/>
    <property type="project" value="UniProtKB-UniPathway"/>
</dbReference>
<dbReference type="CDD" id="cd01392">
    <property type="entry name" value="HTH_LacI"/>
    <property type="match status" value="1"/>
</dbReference>
<dbReference type="CDD" id="cd06275">
    <property type="entry name" value="PBP1_PurR"/>
    <property type="match status" value="1"/>
</dbReference>
<dbReference type="FunFam" id="1.10.260.40:FF:000002">
    <property type="entry name" value="HTH-type transcriptional repressor PurR"/>
    <property type="match status" value="1"/>
</dbReference>
<dbReference type="FunFam" id="3.40.50.2300:FF:000045">
    <property type="entry name" value="HTH-type transcriptional repressor PurR"/>
    <property type="match status" value="1"/>
</dbReference>
<dbReference type="Gene3D" id="3.40.50.2300">
    <property type="match status" value="2"/>
</dbReference>
<dbReference type="Gene3D" id="1.10.260.40">
    <property type="entry name" value="lambda repressor-like DNA-binding domains"/>
    <property type="match status" value="1"/>
</dbReference>
<dbReference type="HAMAP" id="MF_01277">
    <property type="entry name" value="HTH_type_PurR"/>
    <property type="match status" value="1"/>
</dbReference>
<dbReference type="InterPro" id="IPR000843">
    <property type="entry name" value="HTH_LacI"/>
</dbReference>
<dbReference type="InterPro" id="IPR046335">
    <property type="entry name" value="LacI/GalR-like_sensor"/>
</dbReference>
<dbReference type="InterPro" id="IPR010982">
    <property type="entry name" value="Lambda_DNA-bd_dom_sf"/>
</dbReference>
<dbReference type="InterPro" id="IPR028082">
    <property type="entry name" value="Peripla_BP_I"/>
</dbReference>
<dbReference type="InterPro" id="IPR023588">
    <property type="entry name" value="Tscrpt_reg_HTH_PurR"/>
</dbReference>
<dbReference type="NCBIfam" id="NF007979">
    <property type="entry name" value="PRK10703.1"/>
    <property type="match status" value="1"/>
</dbReference>
<dbReference type="PANTHER" id="PTHR30146:SF148">
    <property type="entry name" value="HTH-TYPE TRANSCRIPTIONAL REPRESSOR PURR-RELATED"/>
    <property type="match status" value="1"/>
</dbReference>
<dbReference type="PANTHER" id="PTHR30146">
    <property type="entry name" value="LACI-RELATED TRANSCRIPTIONAL REPRESSOR"/>
    <property type="match status" value="1"/>
</dbReference>
<dbReference type="Pfam" id="PF00356">
    <property type="entry name" value="LacI"/>
    <property type="match status" value="1"/>
</dbReference>
<dbReference type="Pfam" id="PF13377">
    <property type="entry name" value="Peripla_BP_3"/>
    <property type="match status" value="1"/>
</dbReference>
<dbReference type="PRINTS" id="PR00036">
    <property type="entry name" value="HTHLACI"/>
</dbReference>
<dbReference type="SMART" id="SM00354">
    <property type="entry name" value="HTH_LACI"/>
    <property type="match status" value="1"/>
</dbReference>
<dbReference type="SUPFAM" id="SSF47413">
    <property type="entry name" value="lambda repressor-like DNA-binding domains"/>
    <property type="match status" value="1"/>
</dbReference>
<dbReference type="SUPFAM" id="SSF53822">
    <property type="entry name" value="Periplasmic binding protein-like I"/>
    <property type="match status" value="1"/>
</dbReference>
<dbReference type="PROSITE" id="PS00356">
    <property type="entry name" value="HTH_LACI_1"/>
    <property type="match status" value="1"/>
</dbReference>
<dbReference type="PROSITE" id="PS50932">
    <property type="entry name" value="HTH_LACI_2"/>
    <property type="match status" value="1"/>
</dbReference>
<feature type="chain" id="PRO_1000165217" description="HTH-type transcriptional repressor PurR">
    <location>
        <begin position="1"/>
        <end position="341"/>
    </location>
</feature>
<feature type="domain" description="HTH lacI-type" evidence="1">
    <location>
        <begin position="2"/>
        <end position="56"/>
    </location>
</feature>
<feature type="DNA-binding region" description="H-T-H motif" evidence="1">
    <location>
        <begin position="4"/>
        <end position="23"/>
    </location>
</feature>
<feature type="DNA-binding region" evidence="1">
    <location>
        <begin position="48"/>
        <end position="56"/>
    </location>
</feature>
<feature type="binding site" evidence="1">
    <location>
        <position position="73"/>
    </location>
    <ligand>
        <name>hypoxanthine</name>
        <dbReference type="ChEBI" id="CHEBI:17368"/>
    </ligand>
</feature>
<feature type="binding site" evidence="1">
    <location>
        <position position="190"/>
    </location>
    <ligand>
        <name>hypoxanthine</name>
        <dbReference type="ChEBI" id="CHEBI:17368"/>
    </ligand>
</feature>
<feature type="binding site" evidence="1">
    <location>
        <position position="192"/>
    </location>
    <ligand>
        <name>hypoxanthine</name>
        <dbReference type="ChEBI" id="CHEBI:17368"/>
    </ligand>
</feature>
<feature type="binding site" evidence="1">
    <location>
        <position position="221"/>
    </location>
    <ligand>
        <name>hypoxanthine</name>
        <dbReference type="ChEBI" id="CHEBI:17368"/>
    </ligand>
</feature>
<feature type="binding site" evidence="1">
    <location>
        <position position="275"/>
    </location>
    <ligand>
        <name>hypoxanthine</name>
        <dbReference type="ChEBI" id="CHEBI:17368"/>
    </ligand>
</feature>
<reference key="1">
    <citation type="journal article" date="2009" name="PLoS ONE">
        <title>Salmonella paratyphi C: genetic divergence from Salmonella choleraesuis and pathogenic convergence with Salmonella typhi.</title>
        <authorList>
            <person name="Liu W.-Q."/>
            <person name="Feng Y."/>
            <person name="Wang Y."/>
            <person name="Zou Q.-H."/>
            <person name="Chen F."/>
            <person name="Guo J.-T."/>
            <person name="Peng Y.-H."/>
            <person name="Jin Y."/>
            <person name="Li Y.-G."/>
            <person name="Hu S.-N."/>
            <person name="Johnston R.N."/>
            <person name="Liu G.-R."/>
            <person name="Liu S.-L."/>
        </authorList>
    </citation>
    <scope>NUCLEOTIDE SEQUENCE [LARGE SCALE GENOMIC DNA]</scope>
    <source>
        <strain>RKS4594</strain>
    </source>
</reference>